<accession>Q9WUJ8</accession>
<dbReference type="EMBL" id="AF139659">
    <property type="protein sequence ID" value="AAD32667.1"/>
    <property type="molecule type" value="mRNA"/>
</dbReference>
<dbReference type="CCDS" id="CCDS22497.1"/>
<dbReference type="SMR" id="Q9WUJ8"/>
<dbReference type="ComplexPortal" id="CPX-1915">
    <property type="entry name" value="Nuclear origin recognition complex"/>
</dbReference>
<dbReference type="CORUM" id="Q9WUJ8"/>
<dbReference type="FunCoup" id="Q9WUJ8">
    <property type="interactions" value="1163"/>
</dbReference>
<dbReference type="STRING" id="10090.ENSMUSP00000034132"/>
<dbReference type="iPTMnet" id="Q9WUJ8"/>
<dbReference type="PhosphoSitePlus" id="Q9WUJ8"/>
<dbReference type="PaxDb" id="10090-ENSMUSP00000034132"/>
<dbReference type="ProteomicsDB" id="293523"/>
<dbReference type="Pumba" id="Q9WUJ8"/>
<dbReference type="AGR" id="MGI:1929285"/>
<dbReference type="MGI" id="MGI:1929285">
    <property type="gene designation" value="Orc6"/>
</dbReference>
<dbReference type="eggNOG" id="KOG4557">
    <property type="taxonomic scope" value="Eukaryota"/>
</dbReference>
<dbReference type="InParanoid" id="Q9WUJ8"/>
<dbReference type="PhylomeDB" id="Q9WUJ8"/>
<dbReference type="Reactome" id="R-MMU-176187">
    <property type="pathway name" value="Activation of ATR in response to replication stress"/>
</dbReference>
<dbReference type="Reactome" id="R-MMU-68616">
    <property type="pathway name" value="Assembly of the ORC complex at the origin of replication"/>
</dbReference>
<dbReference type="Reactome" id="R-MMU-68689">
    <property type="pathway name" value="CDC6 association with the ORC:origin complex"/>
</dbReference>
<dbReference type="Reactome" id="R-MMU-68949">
    <property type="pathway name" value="Orc1 removal from chromatin"/>
</dbReference>
<dbReference type="Reactome" id="R-MMU-68962">
    <property type="pathway name" value="Activation of the pre-replicative complex"/>
</dbReference>
<dbReference type="ChiTaRS" id="Orc6">
    <property type="organism name" value="mouse"/>
</dbReference>
<dbReference type="PRO" id="PR:Q9WUJ8"/>
<dbReference type="Proteomes" id="UP000000589">
    <property type="component" value="Unplaced"/>
</dbReference>
<dbReference type="RNAct" id="Q9WUJ8">
    <property type="molecule type" value="protein"/>
</dbReference>
<dbReference type="GO" id="GO:0005664">
    <property type="term" value="C:nuclear origin of replication recognition complex"/>
    <property type="evidence" value="ECO:0000303"/>
    <property type="project" value="ComplexPortal"/>
</dbReference>
<dbReference type="GO" id="GO:0003677">
    <property type="term" value="F:DNA binding"/>
    <property type="evidence" value="ECO:0007669"/>
    <property type="project" value="UniProtKB-KW"/>
</dbReference>
<dbReference type="GO" id="GO:0006270">
    <property type="term" value="P:DNA replication initiation"/>
    <property type="evidence" value="ECO:0000266"/>
    <property type="project" value="ComplexPortal"/>
</dbReference>
<dbReference type="GO" id="GO:0006261">
    <property type="term" value="P:DNA-templated DNA replication"/>
    <property type="evidence" value="ECO:0000315"/>
    <property type="project" value="MGI"/>
</dbReference>
<dbReference type="CDD" id="cd16075">
    <property type="entry name" value="ORC6_CTD"/>
    <property type="match status" value="1"/>
</dbReference>
<dbReference type="CDD" id="cd11583">
    <property type="entry name" value="Orc6_mid"/>
    <property type="match status" value="1"/>
</dbReference>
<dbReference type="FunFam" id="1.10.472.10:FF:000054">
    <property type="entry name" value="origin recognition complex subunit 6"/>
    <property type="match status" value="1"/>
</dbReference>
<dbReference type="Gene3D" id="1.10.472.10">
    <property type="entry name" value="Cyclin-like"/>
    <property type="match status" value="1"/>
</dbReference>
<dbReference type="InterPro" id="IPR054113">
    <property type="entry name" value="ORC6_cyclin-like_2nd"/>
</dbReference>
<dbReference type="InterPro" id="IPR008721">
    <property type="entry name" value="ORC6_cyclin_first"/>
</dbReference>
<dbReference type="InterPro" id="IPR020529">
    <property type="entry name" value="ORC6_met/pln"/>
</dbReference>
<dbReference type="PANTHER" id="PTHR13394">
    <property type="entry name" value="ORIGIN RECOGNITION COMPLEX SUBUNIT 6"/>
    <property type="match status" value="1"/>
</dbReference>
<dbReference type="PANTHER" id="PTHR13394:SF0">
    <property type="entry name" value="ORIGIN RECOGNITION COMPLEX SUBUNIT 6"/>
    <property type="match status" value="1"/>
</dbReference>
<dbReference type="Pfam" id="PF05460">
    <property type="entry name" value="ORC6"/>
    <property type="match status" value="1"/>
</dbReference>
<dbReference type="Pfam" id="PF21913">
    <property type="entry name" value="ORC6_2nd"/>
    <property type="match status" value="1"/>
</dbReference>
<gene>
    <name type="primary">Orc6</name>
    <name type="synonym">Orc6l</name>
</gene>
<evidence type="ECO:0000250" key="1"/>
<evidence type="ECO:0000250" key="2">
    <source>
        <dbReference type="UniProtKB" id="Q9Y5N6"/>
    </source>
</evidence>
<evidence type="ECO:0000256" key="3">
    <source>
        <dbReference type="SAM" id="MobiDB-lite"/>
    </source>
</evidence>
<evidence type="ECO:0000269" key="4">
    <source>
    </source>
</evidence>
<evidence type="ECO:0000305" key="5"/>
<reference key="1">
    <citation type="submission" date="1999-03" db="EMBL/GenBank/DDBJ databases">
        <title>cDNA Cloning of a homolog for Saccharomyces cerevisiae ORC6 from Mus musculus.</title>
        <authorList>
            <person name="Dean F.B."/>
            <person name="O'Donnell M."/>
        </authorList>
    </citation>
    <scope>NUCLEOTIDE SEQUENCE [MRNA]</scope>
</reference>
<reference key="2">
    <citation type="journal article" date="2003" name="J. Mol. Biol.">
        <title>Interaction and assembly of murine pre-replicative complex proteins in yeast and mouse cells.</title>
        <authorList>
            <person name="Kneissl M."/>
            <person name="Puetter V."/>
            <person name="Szalay A.A."/>
            <person name="Grummt F."/>
        </authorList>
    </citation>
    <scope>INTERACTION WITH DBF4</scope>
</reference>
<protein>
    <recommendedName>
        <fullName>Origin recognition complex subunit 6</fullName>
    </recommendedName>
</protein>
<comment type="function">
    <text evidence="1">Component of the origin recognition complex (ORC) that binds origins of replication. DNA-binding is ATP-dependent. The specific DNA sequences that define origins of replication have not been identified yet. ORC is required to assemble the pre-replication complex necessary to initiate DNA replication (By similarity).</text>
</comment>
<comment type="subunit">
    <text evidence="1 4">Component of ORC, a complex composed of at least 6 subunits: ORC1, ORC2, ORC3, ORC4, ORC5 and ORC6. ORC is regulated in a cell-cycle dependent manner. It is sequentially assembled at the exit from anaphase of mitosis and disassembled as cells enter S phase (By similarity). Interacts with DBF4.</text>
</comment>
<comment type="subcellular location">
    <subcellularLocation>
        <location evidence="1">Nucleus</location>
    </subcellularLocation>
</comment>
<comment type="similarity">
    <text evidence="5">Belongs to the ORC6 family.</text>
</comment>
<name>ORC6_MOUSE</name>
<proteinExistence type="evidence at protein level"/>
<sequence length="262" mass="29188">MESELVRRLAPRLGLAEPSVLRKAEEFLRLSKVKCVSLSARSSETSNAVICLDLAASCRKCPLDRAYLIRLSGLNKMMYQSCLKSFECLLGLNSNVGIRDLAVQFSCTEAVNLAAEILQSYKSGLPETQRADLDLSRPLFTTAALLSACKILKIKVDKTKMITTSGVKKAILDRLCKQLEKIGQQINRDSADLARPALKRKKPEFSPTLKKKEPGLEPPAKEIEVIETLHKLPKDEDLTQDYEEWKRKILENAAKAQTATAE</sequence>
<keyword id="KW-0235">DNA replication</keyword>
<keyword id="KW-0238">DNA-binding</keyword>
<keyword id="KW-1017">Isopeptide bond</keyword>
<keyword id="KW-0539">Nucleus</keyword>
<keyword id="KW-0597">Phosphoprotein</keyword>
<keyword id="KW-1185">Reference proteome</keyword>
<keyword id="KW-0832">Ubl conjugation</keyword>
<organism>
    <name type="scientific">Mus musculus</name>
    <name type="common">Mouse</name>
    <dbReference type="NCBI Taxonomy" id="10090"/>
    <lineage>
        <taxon>Eukaryota</taxon>
        <taxon>Metazoa</taxon>
        <taxon>Chordata</taxon>
        <taxon>Craniata</taxon>
        <taxon>Vertebrata</taxon>
        <taxon>Euteleostomi</taxon>
        <taxon>Mammalia</taxon>
        <taxon>Eutheria</taxon>
        <taxon>Euarchontoglires</taxon>
        <taxon>Glires</taxon>
        <taxon>Rodentia</taxon>
        <taxon>Myomorpha</taxon>
        <taxon>Muroidea</taxon>
        <taxon>Muridae</taxon>
        <taxon>Murinae</taxon>
        <taxon>Mus</taxon>
        <taxon>Mus</taxon>
    </lineage>
</organism>
<feature type="chain" id="PRO_0000127098" description="Origin recognition complex subunit 6">
    <location>
        <begin position="1"/>
        <end position="262"/>
    </location>
</feature>
<feature type="region of interest" description="Disordered" evidence="3">
    <location>
        <begin position="197"/>
        <end position="217"/>
    </location>
</feature>
<feature type="modified residue" description="Phosphothreonine" evidence="2">
    <location>
        <position position="239"/>
    </location>
</feature>
<feature type="cross-link" description="Glycyl lysine isopeptide (Lys-Gly) (interchain with G-Cter in SUMO2)" evidence="2">
    <location>
        <position position="221"/>
    </location>
</feature>